<keyword id="KW-1185">Reference proteome</keyword>
<keyword id="KW-0687">Ribonucleoprotein</keyword>
<keyword id="KW-0689">Ribosomal protein</keyword>
<keyword id="KW-0694">RNA-binding</keyword>
<keyword id="KW-0699">rRNA-binding</keyword>
<accession>A9MN54</accession>
<gene>
    <name evidence="1" type="primary">rpsC</name>
    <name type="ordered locus">SARI_04195</name>
</gene>
<evidence type="ECO:0000255" key="1">
    <source>
        <dbReference type="HAMAP-Rule" id="MF_01309"/>
    </source>
</evidence>
<evidence type="ECO:0000305" key="2"/>
<feature type="chain" id="PRO_1000086154" description="Small ribosomal subunit protein uS3">
    <location>
        <begin position="1"/>
        <end position="233"/>
    </location>
</feature>
<feature type="domain" description="KH type-2" evidence="1">
    <location>
        <begin position="39"/>
        <end position="107"/>
    </location>
</feature>
<comment type="function">
    <text evidence="1">Binds the lower part of the 30S subunit head. Binds mRNA in the 70S ribosome, positioning it for translation.</text>
</comment>
<comment type="subunit">
    <text evidence="1">Part of the 30S ribosomal subunit. Forms a tight complex with proteins S10 and S14.</text>
</comment>
<comment type="similarity">
    <text evidence="1">Belongs to the universal ribosomal protein uS3 family.</text>
</comment>
<sequence length="233" mass="25983">MGQKVHPNGIRLGIVKPWNSTWFANTKEFADNLDSDFKVRQYLTKELAKASVSRIVIERPAKSIRVTIHTARPGIVIGKKGEDVEKLRKVVADIAGVPAQINIAEVRKPELDAKLVADSITSQLERRVMFRRAMKRAVQNAMRLGAKGIKVEVSGRLGGAEIARTEWYREGRVPLHTLRADIDYNTSEAHTTYGVIGVKVWIFKGEILGGMAAVEQPEKPAAQPKKQQRKGRK</sequence>
<dbReference type="EMBL" id="CP000880">
    <property type="protein sequence ID" value="ABX23984.1"/>
    <property type="molecule type" value="Genomic_DNA"/>
</dbReference>
<dbReference type="SMR" id="A9MN54"/>
<dbReference type="STRING" id="41514.SARI_04195"/>
<dbReference type="KEGG" id="ses:SARI_04195"/>
<dbReference type="HOGENOM" id="CLU_058591_0_2_6"/>
<dbReference type="Proteomes" id="UP000002084">
    <property type="component" value="Chromosome"/>
</dbReference>
<dbReference type="GO" id="GO:0022627">
    <property type="term" value="C:cytosolic small ribosomal subunit"/>
    <property type="evidence" value="ECO:0007669"/>
    <property type="project" value="TreeGrafter"/>
</dbReference>
<dbReference type="GO" id="GO:0003729">
    <property type="term" value="F:mRNA binding"/>
    <property type="evidence" value="ECO:0007669"/>
    <property type="project" value="UniProtKB-UniRule"/>
</dbReference>
<dbReference type="GO" id="GO:0019843">
    <property type="term" value="F:rRNA binding"/>
    <property type="evidence" value="ECO:0007669"/>
    <property type="project" value="UniProtKB-UniRule"/>
</dbReference>
<dbReference type="GO" id="GO:0003735">
    <property type="term" value="F:structural constituent of ribosome"/>
    <property type="evidence" value="ECO:0007669"/>
    <property type="project" value="InterPro"/>
</dbReference>
<dbReference type="GO" id="GO:0006412">
    <property type="term" value="P:translation"/>
    <property type="evidence" value="ECO:0007669"/>
    <property type="project" value="UniProtKB-UniRule"/>
</dbReference>
<dbReference type="CDD" id="cd02412">
    <property type="entry name" value="KH-II_30S_S3"/>
    <property type="match status" value="1"/>
</dbReference>
<dbReference type="FunFam" id="3.30.1140.32:FF:000001">
    <property type="entry name" value="30S ribosomal protein S3"/>
    <property type="match status" value="1"/>
</dbReference>
<dbReference type="FunFam" id="3.30.300.20:FF:000001">
    <property type="entry name" value="30S ribosomal protein S3"/>
    <property type="match status" value="1"/>
</dbReference>
<dbReference type="Gene3D" id="3.30.300.20">
    <property type="match status" value="1"/>
</dbReference>
<dbReference type="Gene3D" id="3.30.1140.32">
    <property type="entry name" value="Ribosomal protein S3, C-terminal domain"/>
    <property type="match status" value="1"/>
</dbReference>
<dbReference type="HAMAP" id="MF_01309_B">
    <property type="entry name" value="Ribosomal_uS3_B"/>
    <property type="match status" value="1"/>
</dbReference>
<dbReference type="InterPro" id="IPR004087">
    <property type="entry name" value="KH_dom"/>
</dbReference>
<dbReference type="InterPro" id="IPR015946">
    <property type="entry name" value="KH_dom-like_a/b"/>
</dbReference>
<dbReference type="InterPro" id="IPR004044">
    <property type="entry name" value="KH_dom_type_2"/>
</dbReference>
<dbReference type="InterPro" id="IPR009019">
    <property type="entry name" value="KH_sf_prok-type"/>
</dbReference>
<dbReference type="InterPro" id="IPR036419">
    <property type="entry name" value="Ribosomal_S3_C_sf"/>
</dbReference>
<dbReference type="InterPro" id="IPR005704">
    <property type="entry name" value="Ribosomal_uS3_bac-typ"/>
</dbReference>
<dbReference type="InterPro" id="IPR001351">
    <property type="entry name" value="Ribosomal_uS3_C"/>
</dbReference>
<dbReference type="InterPro" id="IPR018280">
    <property type="entry name" value="Ribosomal_uS3_CS"/>
</dbReference>
<dbReference type="NCBIfam" id="TIGR01009">
    <property type="entry name" value="rpsC_bact"/>
    <property type="match status" value="1"/>
</dbReference>
<dbReference type="PANTHER" id="PTHR11760">
    <property type="entry name" value="30S/40S RIBOSOMAL PROTEIN S3"/>
    <property type="match status" value="1"/>
</dbReference>
<dbReference type="PANTHER" id="PTHR11760:SF19">
    <property type="entry name" value="SMALL RIBOSOMAL SUBUNIT PROTEIN US3C"/>
    <property type="match status" value="1"/>
</dbReference>
<dbReference type="Pfam" id="PF07650">
    <property type="entry name" value="KH_2"/>
    <property type="match status" value="1"/>
</dbReference>
<dbReference type="Pfam" id="PF00189">
    <property type="entry name" value="Ribosomal_S3_C"/>
    <property type="match status" value="1"/>
</dbReference>
<dbReference type="SMART" id="SM00322">
    <property type="entry name" value="KH"/>
    <property type="match status" value="1"/>
</dbReference>
<dbReference type="SUPFAM" id="SSF54814">
    <property type="entry name" value="Prokaryotic type KH domain (KH-domain type II)"/>
    <property type="match status" value="1"/>
</dbReference>
<dbReference type="SUPFAM" id="SSF54821">
    <property type="entry name" value="Ribosomal protein S3 C-terminal domain"/>
    <property type="match status" value="1"/>
</dbReference>
<dbReference type="PROSITE" id="PS50823">
    <property type="entry name" value="KH_TYPE_2"/>
    <property type="match status" value="1"/>
</dbReference>
<dbReference type="PROSITE" id="PS00548">
    <property type="entry name" value="RIBOSOMAL_S3"/>
    <property type="match status" value="1"/>
</dbReference>
<proteinExistence type="inferred from homology"/>
<protein>
    <recommendedName>
        <fullName evidence="1">Small ribosomal subunit protein uS3</fullName>
    </recommendedName>
    <alternativeName>
        <fullName evidence="2">30S ribosomal protein S3</fullName>
    </alternativeName>
</protein>
<reference key="1">
    <citation type="submission" date="2007-11" db="EMBL/GenBank/DDBJ databases">
        <authorList>
            <consortium name="The Salmonella enterica serovar Arizonae Genome Sequencing Project"/>
            <person name="McClelland M."/>
            <person name="Sanderson E.K."/>
            <person name="Porwollik S."/>
            <person name="Spieth J."/>
            <person name="Clifton W.S."/>
            <person name="Fulton R."/>
            <person name="Chunyan W."/>
            <person name="Wollam A."/>
            <person name="Shah N."/>
            <person name="Pepin K."/>
            <person name="Bhonagiri V."/>
            <person name="Nash W."/>
            <person name="Johnson M."/>
            <person name="Thiruvilangam P."/>
            <person name="Wilson R."/>
        </authorList>
    </citation>
    <scope>NUCLEOTIDE SEQUENCE [LARGE SCALE GENOMIC DNA]</scope>
    <source>
        <strain>ATCC BAA-731 / CDC346-86 / RSK2980</strain>
    </source>
</reference>
<name>RS3_SALAR</name>
<organism>
    <name type="scientific">Salmonella arizonae (strain ATCC BAA-731 / CDC346-86 / RSK2980)</name>
    <dbReference type="NCBI Taxonomy" id="41514"/>
    <lineage>
        <taxon>Bacteria</taxon>
        <taxon>Pseudomonadati</taxon>
        <taxon>Pseudomonadota</taxon>
        <taxon>Gammaproteobacteria</taxon>
        <taxon>Enterobacterales</taxon>
        <taxon>Enterobacteriaceae</taxon>
        <taxon>Salmonella</taxon>
    </lineage>
</organism>